<reference evidence="2" key="1">
    <citation type="submission" date="2019-05" db="UniProtKB">
        <title>Studies on purification and molecular characterization of antimicrobial protein from salt pan halophilic bacteria Bacillus firmus.</title>
        <authorList>
            <person name="Manikandan P."/>
            <person name="Senthilkumar P.K."/>
        </authorList>
    </citation>
    <scope>PROTEIN SEQUENCE</scope>
</reference>
<proteinExistence type="evidence at protein level"/>
<evidence type="ECO:0000250" key="1">
    <source>
        <dbReference type="UniProtKB" id="O07623"/>
    </source>
</evidence>
<evidence type="ECO:0000305" key="2"/>
<keyword id="KW-0044">Antibiotic</keyword>
<keyword id="KW-0929">Antimicrobial</keyword>
<keyword id="KW-0078">Bacteriocin</keyword>
<keyword id="KW-0208">D-amino acid</keyword>
<keyword id="KW-0903">Direct protein sequencing</keyword>
<keyword id="KW-0964">Secreted</keyword>
<keyword id="KW-0883">Thioether bond</keyword>
<name>SBOA_CYTFI</name>
<dbReference type="SMR" id="C0HLK6"/>
<dbReference type="GO" id="GO:0005576">
    <property type="term" value="C:extracellular region"/>
    <property type="evidence" value="ECO:0007669"/>
    <property type="project" value="UniProtKB-SubCell"/>
</dbReference>
<dbReference type="GO" id="GO:0042742">
    <property type="term" value="P:defense response to bacterium"/>
    <property type="evidence" value="ECO:0007669"/>
    <property type="project" value="UniProtKB-KW"/>
</dbReference>
<dbReference type="GO" id="GO:0031640">
    <property type="term" value="P:killing of cells of another organism"/>
    <property type="evidence" value="ECO:0007669"/>
    <property type="project" value="UniProtKB-KW"/>
</dbReference>
<dbReference type="InterPro" id="IPR021539">
    <property type="entry name" value="Subtilosin_A"/>
</dbReference>
<dbReference type="Pfam" id="PF11420">
    <property type="entry name" value="Subtilosin_A"/>
    <property type="match status" value="1"/>
</dbReference>
<organism>
    <name type="scientific">Cytobacillus firmus</name>
    <name type="common">Bacillus firmus</name>
    <dbReference type="NCBI Taxonomy" id="1399"/>
    <lineage>
        <taxon>Bacteria</taxon>
        <taxon>Bacillati</taxon>
        <taxon>Bacillota</taxon>
        <taxon>Bacilli</taxon>
        <taxon>Bacillales</taxon>
        <taxon>Bacillaceae</taxon>
        <taxon>Cytobacillus</taxon>
    </lineage>
</organism>
<accession>C0HLK6</accession>
<feature type="peptide" id="PRO_0000447649" description="Subtilosin-A">
    <location>
        <begin position="1"/>
        <end position="34"/>
    </location>
</feature>
<feature type="cross-link" description="Cyclopeptide (Asn-Gly)" evidence="1">
    <location>
        <begin position="1"/>
        <end position="34"/>
    </location>
</feature>
<feature type="cross-link" description="2-cysteinyl-D-allo-threonine (Cys-Thr)" evidence="1">
    <location>
        <begin position="7"/>
        <end position="28"/>
    </location>
</feature>
<feature type="cross-link" description="2-cysteinyl-L-phenylalanine (Cys-Phe)" evidence="1">
    <location>
        <begin position="13"/>
        <end position="22"/>
    </location>
</feature>
<protein>
    <recommendedName>
        <fullName evidence="2">Subtilosin-A</fullName>
    </recommendedName>
</protein>
<sequence>NKGCATCSIGIACLVDGPIPDFECAGATGLGLWG</sequence>
<comment type="function">
    <text evidence="1">Has bactericidal activity against some Gram-positive bacteria.</text>
</comment>
<comment type="subcellular location">
    <subcellularLocation>
        <location evidence="1">Secreted</location>
    </subcellularLocation>
</comment>
<comment type="PTM">
    <text evidence="1">Alpha-amino of Asn-1 is covalently linked with the carboxyl of Gly-34 to form a cyclopeptide (By similarity). Thioether cross-links are formed between cysteines and the alpha-carbons of other amino acids, Cys-7 to Thr-28 and Cys-13 to Phe-22 (By similarity). In forming this cross-link, Thr-28 is converted to D-amino acid (By similarity).</text>
</comment>
<comment type="similarity">
    <text evidence="2">Belongs to the bacteriocin class V family.</text>
</comment>